<accession>B2K2S3</accession>
<protein>
    <recommendedName>
        <fullName evidence="1">UPF0213 protein YPTS_0528</fullName>
    </recommendedName>
</protein>
<reference key="1">
    <citation type="submission" date="2008-04" db="EMBL/GenBank/DDBJ databases">
        <title>Complete sequence of Yersinia pseudotuberculosis PB1/+.</title>
        <authorList>
            <person name="Copeland A."/>
            <person name="Lucas S."/>
            <person name="Lapidus A."/>
            <person name="Glavina del Rio T."/>
            <person name="Dalin E."/>
            <person name="Tice H."/>
            <person name="Bruce D."/>
            <person name="Goodwin L."/>
            <person name="Pitluck S."/>
            <person name="Munk A.C."/>
            <person name="Brettin T."/>
            <person name="Detter J.C."/>
            <person name="Han C."/>
            <person name="Tapia R."/>
            <person name="Schmutz J."/>
            <person name="Larimer F."/>
            <person name="Land M."/>
            <person name="Hauser L."/>
            <person name="Challacombe J.F."/>
            <person name="Green L."/>
            <person name="Lindler L.E."/>
            <person name="Nikolich M.P."/>
            <person name="Richardson P."/>
        </authorList>
    </citation>
    <scope>NUCLEOTIDE SEQUENCE [LARGE SCALE GENOMIC DNA]</scope>
    <source>
        <strain>PB1/+</strain>
    </source>
</reference>
<name>Y528_YERPB</name>
<proteinExistence type="inferred from homology"/>
<comment type="similarity">
    <text evidence="1">Belongs to the UPF0213 family.</text>
</comment>
<gene>
    <name type="ordered locus">YPTS_0528</name>
</gene>
<feature type="chain" id="PRO_1000135752" description="UPF0213 protein YPTS_0528">
    <location>
        <begin position="1"/>
        <end position="95"/>
    </location>
</feature>
<feature type="domain" description="GIY-YIG" evidence="1">
    <location>
        <begin position="4"/>
        <end position="79"/>
    </location>
</feature>
<dbReference type="EMBL" id="CP001048">
    <property type="protein sequence ID" value="ACC87514.1"/>
    <property type="molecule type" value="Genomic_DNA"/>
</dbReference>
<dbReference type="RefSeq" id="WP_011191637.1">
    <property type="nucleotide sequence ID" value="NZ_CP009780.1"/>
</dbReference>
<dbReference type="SMR" id="B2K2S3"/>
<dbReference type="KEGG" id="ypb:YPTS_0528"/>
<dbReference type="PATRIC" id="fig|502801.10.peg.4203"/>
<dbReference type="CDD" id="cd10456">
    <property type="entry name" value="GIY-YIG_UPF0213"/>
    <property type="match status" value="1"/>
</dbReference>
<dbReference type="Gene3D" id="3.40.1440.10">
    <property type="entry name" value="GIY-YIG endonuclease"/>
    <property type="match status" value="1"/>
</dbReference>
<dbReference type="HAMAP" id="MF_01029">
    <property type="entry name" value="UPF0213"/>
    <property type="match status" value="1"/>
</dbReference>
<dbReference type="InterPro" id="IPR000305">
    <property type="entry name" value="GIY-YIG_endonuc"/>
</dbReference>
<dbReference type="InterPro" id="IPR035901">
    <property type="entry name" value="GIY-YIG_endonuc_sf"/>
</dbReference>
<dbReference type="InterPro" id="IPR050190">
    <property type="entry name" value="UPF0213_domain"/>
</dbReference>
<dbReference type="InterPro" id="IPR022992">
    <property type="entry name" value="UPF0213_GIY-YIG_endonuc"/>
</dbReference>
<dbReference type="PANTHER" id="PTHR34477">
    <property type="entry name" value="UPF0213 PROTEIN YHBQ"/>
    <property type="match status" value="1"/>
</dbReference>
<dbReference type="PANTHER" id="PTHR34477:SF1">
    <property type="entry name" value="UPF0213 PROTEIN YHBQ"/>
    <property type="match status" value="1"/>
</dbReference>
<dbReference type="Pfam" id="PF01541">
    <property type="entry name" value="GIY-YIG"/>
    <property type="match status" value="1"/>
</dbReference>
<dbReference type="SUPFAM" id="SSF82771">
    <property type="entry name" value="GIY-YIG endonuclease"/>
    <property type="match status" value="1"/>
</dbReference>
<dbReference type="PROSITE" id="PS50164">
    <property type="entry name" value="GIY_YIG"/>
    <property type="match status" value="1"/>
</dbReference>
<organism>
    <name type="scientific">Yersinia pseudotuberculosis serotype IB (strain PB1/+)</name>
    <dbReference type="NCBI Taxonomy" id="502801"/>
    <lineage>
        <taxon>Bacteria</taxon>
        <taxon>Pseudomonadati</taxon>
        <taxon>Pseudomonadota</taxon>
        <taxon>Gammaproteobacteria</taxon>
        <taxon>Enterobacterales</taxon>
        <taxon>Yersiniaceae</taxon>
        <taxon>Yersinia</taxon>
    </lineage>
</organism>
<evidence type="ECO:0000255" key="1">
    <source>
        <dbReference type="HAMAP-Rule" id="MF_01029"/>
    </source>
</evidence>
<sequence length="95" mass="10643">MSDSLWHLYLLRTASGMLYTGITTDVARRLAQHQAGKGAKALRGKGELTLVFHCEAGDRSTALKLEYRVKQLSKQQKEKLVIDQPRLLTTLFLAS</sequence>